<name>SC61A_HALRO</name>
<proteinExistence type="evidence at transcript level"/>
<organism>
    <name type="scientific">Halocynthia roretzi</name>
    <name type="common">Sea squirt</name>
    <name type="synonym">Cynthia roretzi</name>
    <dbReference type="NCBI Taxonomy" id="7729"/>
    <lineage>
        <taxon>Eukaryota</taxon>
        <taxon>Metazoa</taxon>
        <taxon>Chordata</taxon>
        <taxon>Tunicata</taxon>
        <taxon>Ascidiacea</taxon>
        <taxon>Stolidobranchia</taxon>
        <taxon>Pyuridae</taxon>
        <taxon>Halocynthia</taxon>
    </lineage>
</organism>
<accession>Q25147</accession>
<accession>Q25146</accession>
<keyword id="KW-0217">Developmental protein</keyword>
<keyword id="KW-0256">Endoplasmic reticulum</keyword>
<keyword id="KW-0472">Membrane</keyword>
<keyword id="KW-0653">Protein transport</keyword>
<keyword id="KW-0811">Translocation</keyword>
<keyword id="KW-0812">Transmembrane</keyword>
<keyword id="KW-1133">Transmembrane helix</keyword>
<keyword id="KW-0813">Transport</keyword>
<dbReference type="EMBL" id="D25536">
    <property type="protein sequence ID" value="BAA05019.1"/>
    <property type="molecule type" value="mRNA"/>
</dbReference>
<dbReference type="EMBL" id="D50328">
    <property type="protein sequence ID" value="BAA08864.1"/>
    <property type="molecule type" value="Genomic_DNA"/>
</dbReference>
<dbReference type="SMR" id="Q25147"/>
<dbReference type="GO" id="GO:0005789">
    <property type="term" value="C:endoplasmic reticulum membrane"/>
    <property type="evidence" value="ECO:0000250"/>
    <property type="project" value="UniProtKB"/>
</dbReference>
<dbReference type="GO" id="GO:0039019">
    <property type="term" value="P:pronephric nephron development"/>
    <property type="evidence" value="ECO:0000250"/>
    <property type="project" value="UniProtKB"/>
</dbReference>
<dbReference type="GO" id="GO:0015031">
    <property type="term" value="P:protein transport"/>
    <property type="evidence" value="ECO:0007669"/>
    <property type="project" value="UniProtKB-KW"/>
</dbReference>
<dbReference type="FunFam" id="1.10.3370.10:FF:000002">
    <property type="entry name" value="Transport Sec61 subunit alpha isoform 2"/>
    <property type="match status" value="1"/>
</dbReference>
<dbReference type="Gene3D" id="1.10.3370.10">
    <property type="entry name" value="SecY subunit domain"/>
    <property type="match status" value="1"/>
</dbReference>
<dbReference type="InterPro" id="IPR002208">
    <property type="entry name" value="SecY/SEC61-alpha"/>
</dbReference>
<dbReference type="InterPro" id="IPR030659">
    <property type="entry name" value="SecY_CS"/>
</dbReference>
<dbReference type="InterPro" id="IPR023201">
    <property type="entry name" value="SecY_dom_sf"/>
</dbReference>
<dbReference type="InterPro" id="IPR019561">
    <property type="entry name" value="Translocon_Sec61/SecY_plug_dom"/>
</dbReference>
<dbReference type="NCBIfam" id="TIGR00967">
    <property type="entry name" value="3a0501s007"/>
    <property type="match status" value="1"/>
</dbReference>
<dbReference type="NCBIfam" id="NF006341">
    <property type="entry name" value="PRK08568.1-5"/>
    <property type="match status" value="1"/>
</dbReference>
<dbReference type="PANTHER" id="PTHR10906">
    <property type="entry name" value="SECY/SEC61-ALPHA FAMILY MEMBER"/>
    <property type="match status" value="1"/>
</dbReference>
<dbReference type="Pfam" id="PF10559">
    <property type="entry name" value="Plug_translocon"/>
    <property type="match status" value="1"/>
</dbReference>
<dbReference type="Pfam" id="PF00344">
    <property type="entry name" value="SecY"/>
    <property type="match status" value="1"/>
</dbReference>
<dbReference type="PIRSF" id="PIRSF004557">
    <property type="entry name" value="SecY"/>
    <property type="match status" value="1"/>
</dbReference>
<dbReference type="SUPFAM" id="SSF103491">
    <property type="entry name" value="Preprotein translocase SecY subunit"/>
    <property type="match status" value="1"/>
</dbReference>
<dbReference type="PROSITE" id="PS00755">
    <property type="entry name" value="SECY_1"/>
    <property type="match status" value="1"/>
</dbReference>
<dbReference type="PROSITE" id="PS00756">
    <property type="entry name" value="SECY_2"/>
    <property type="match status" value="1"/>
</dbReference>
<feature type="chain" id="PRO_0000131809" description="Protein transport protein Sec61 subunit alpha">
    <location>
        <begin position="1"/>
        <end position="475"/>
    </location>
</feature>
<feature type="transmembrane region" description="Helical" evidence="3">
    <location>
        <begin position="33"/>
        <end position="53"/>
    </location>
</feature>
<feature type="transmembrane region" description="Helical" evidence="3">
    <location>
        <begin position="76"/>
        <end position="96"/>
    </location>
</feature>
<feature type="transmembrane region" description="Helical" evidence="3">
    <location>
        <begin position="118"/>
        <end position="138"/>
    </location>
</feature>
<feature type="transmembrane region" description="Helical" evidence="3">
    <location>
        <begin position="145"/>
        <end position="165"/>
    </location>
</feature>
<feature type="transmembrane region" description="Helical" evidence="3">
    <location>
        <begin position="173"/>
        <end position="193"/>
    </location>
</feature>
<feature type="transmembrane region" description="Helical" evidence="3">
    <location>
        <begin position="241"/>
        <end position="261"/>
    </location>
</feature>
<feature type="transmembrane region" description="Helical" evidence="3">
    <location>
        <begin position="289"/>
        <end position="309"/>
    </location>
</feature>
<feature type="transmembrane region" description="Helical" evidence="3">
    <location>
        <begin position="354"/>
        <end position="374"/>
    </location>
</feature>
<feature type="transmembrane region" description="Helical" evidence="3">
    <location>
        <begin position="420"/>
        <end position="440"/>
    </location>
</feature>
<feature type="transmembrane region" description="Helical" evidence="3">
    <location>
        <begin position="441"/>
        <end position="461"/>
    </location>
</feature>
<protein>
    <recommendedName>
        <fullName>Protein transport protein Sec61 subunit alpha</fullName>
    </recommendedName>
</protein>
<reference key="1">
    <citation type="journal article" date="1994" name="Dev. Biol.">
        <title>An ascidian homolog of SEC61 is expressed predominantly in epidermal cells of the embryo.</title>
        <authorList>
            <person name="Ueki T."/>
            <person name="Satoh N."/>
        </authorList>
    </citation>
    <scope>NUCLEOTIDE SEQUENCE [GENOMIC DNA / MRNA]</scope>
</reference>
<sequence length="475" mass="52473">MGFKFLEVIKPFCIILPEIEKPQRKIQFREKVLWTAITLFIFLVCCQIPLFGIMSSESADPFYWMRVIMASNRGTLMELGITPIVTSGLIMQLLAGAKLIEVGDTPKDRALFNGAQKLFGMIITIGQAVVYVMTGMYGDPSDMGAGICLLIIIQLFIASLIVLLLDELLQKGYGLGSGISLFIATNICETIVWKSFSPATVNTGRGTEFEGAVIALFHLLATRSDKVRALREAFYRPNLPNLMNLSATILVFGIVIYFQGFRVDLPIKSARYRGQYSSYPIKLFYTSNIPIILQSALVSGLYVISQMLAIRFRGNFFIGLLGVWEDVEGGGPARSYPVALCYYLSPPESFFSMFLDPIHGLLYITFMLGSCAFFSKTWIEVSGSAAKDVAKQLKEQQMVMRGHREKSMIHELNRYIPTAAAFGGLCIGALSVLADFIGAIGSGTGILLAVTIIYQYFEIFVKEQAEVGGMGTLLF</sequence>
<evidence type="ECO:0000250" key="1">
    <source>
        <dbReference type="UniProtKB" id="P38377"/>
    </source>
</evidence>
<evidence type="ECO:0000250" key="2">
    <source>
        <dbReference type="UniProtKB" id="P61619"/>
    </source>
</evidence>
<evidence type="ECO:0000255" key="3"/>
<evidence type="ECO:0000305" key="4"/>
<comment type="function">
    <text evidence="2">Component of SEC61 channel-forming translocon complex that mediates transport of signal peptide-containing precursor polypeptides across the endoplasmic reticulum (ER). Forms a ribosome receptor and a gated pore in the ER membrane, both functions required for cotranslational translocation of nascent polypeptides. May cooperate with auxiliary protein SEC62, SEC63 and HSPA5/BiP to enable post-translational transport of small presecretory proteins. The SEC61 channel is also involved in ER membrane insertion of transmembrane proteins: it mediates membrane insertion of the first few transmembrane segments of proteins, while insertion of subsequent transmembrane regions of multi-pass membrane proteins is mediated by the multi-pass translocon (MPT) complex.</text>
</comment>
<comment type="subunit">
    <text evidence="1 2">The SEC61 channel-forming translocon complex consists of channel-forming core components SEC61A1, SEC61B and SEC61G and different auxiliary components such as SEC62 and SEC63 (By similarity). The SEC61 channel associates with the multi-pass translocon (MPT) complex (By similarity).</text>
</comment>
<comment type="subcellular location">
    <subcellularLocation>
        <location evidence="2">Endoplasmic reticulum membrane</location>
        <topology evidence="2">Multi-pass membrane protein</topology>
    </subcellularLocation>
</comment>
<comment type="tissue specificity">
    <text>Expressed predominantly in epidermal cells of the embryo.</text>
</comment>
<comment type="similarity">
    <text evidence="4">Belongs to the SecY/SEC61-alpha family.</text>
</comment>